<keyword id="KW-0119">Carbohydrate metabolism</keyword>
<keyword id="KW-0313">Glucose metabolism</keyword>
<keyword id="KW-0378">Hydrolase</keyword>
<name>6PGL_SALPA</name>
<feature type="chain" id="PRO_0000171137" description="6-phosphogluconolactonase">
    <location>
        <begin position="1"/>
        <end position="331"/>
    </location>
</feature>
<accession>Q5PG56</accession>
<sequence>MKQTVYTASPESQQIHVWSLNHEGTLTLVQVVDVPGQVQPMVVSPDKRYLYVGVRPEFRVLAYRIAPDDGALTFAAESALPGSPTHISTDHHGRFVFVGSYNAGNVSVTRLQDGLPVELVDVVEGLDGCHSANITPDNRTLWVPALKQERICLFTLSDDGHLVAQEPAEVNTVEGAGPRHMVFHPNRQYAYCVNELNSSVDVWQLKNPHGEIECVQTLDMMPADFSDTRWAADIHITPDGRHLYACDRTASLITVFSVSEDGSVLSVEGFQPTEAQPRGFNIDNSGKYLIAAGQKSHHIAVYEITGTQGLLTEKGRYAVGQGPMWVVVNAY</sequence>
<comment type="function">
    <text evidence="1">Catalyzes the hydrolysis of 6-phosphogluconolactone to 6-phosphogluconate.</text>
</comment>
<comment type="catalytic activity">
    <reaction evidence="1">
        <text>6-phospho-D-glucono-1,5-lactone + H2O = 6-phospho-D-gluconate + H(+)</text>
        <dbReference type="Rhea" id="RHEA:12556"/>
        <dbReference type="ChEBI" id="CHEBI:15377"/>
        <dbReference type="ChEBI" id="CHEBI:15378"/>
        <dbReference type="ChEBI" id="CHEBI:57955"/>
        <dbReference type="ChEBI" id="CHEBI:58759"/>
        <dbReference type="EC" id="3.1.1.31"/>
    </reaction>
</comment>
<comment type="pathway">
    <text evidence="1">Carbohydrate degradation; pentose phosphate pathway; D-ribulose 5-phosphate from D-glucose 6-phosphate (oxidative stage): step 2/3.</text>
</comment>
<comment type="similarity">
    <text evidence="1">Belongs to the cycloisomerase 2 family.</text>
</comment>
<evidence type="ECO:0000255" key="1">
    <source>
        <dbReference type="HAMAP-Rule" id="MF_01605"/>
    </source>
</evidence>
<reference key="1">
    <citation type="journal article" date="2004" name="Nat. Genet.">
        <title>Comparison of genome degradation in Paratyphi A and Typhi, human-restricted serovars of Salmonella enterica that cause typhoid.</title>
        <authorList>
            <person name="McClelland M."/>
            <person name="Sanderson K.E."/>
            <person name="Clifton S.W."/>
            <person name="Latreille P."/>
            <person name="Porwollik S."/>
            <person name="Sabo A."/>
            <person name="Meyer R."/>
            <person name="Bieri T."/>
            <person name="Ozersky P."/>
            <person name="McLellan M."/>
            <person name="Harkins C.R."/>
            <person name="Wang C."/>
            <person name="Nguyen C."/>
            <person name="Berghoff A."/>
            <person name="Elliott G."/>
            <person name="Kohlberg S."/>
            <person name="Strong C."/>
            <person name="Du F."/>
            <person name="Carter J."/>
            <person name="Kremizki C."/>
            <person name="Layman D."/>
            <person name="Leonard S."/>
            <person name="Sun H."/>
            <person name="Fulton L."/>
            <person name="Nash W."/>
            <person name="Miner T."/>
            <person name="Minx P."/>
            <person name="Delehaunty K."/>
            <person name="Fronick C."/>
            <person name="Magrini V."/>
            <person name="Nhan M."/>
            <person name="Warren W."/>
            <person name="Florea L."/>
            <person name="Spieth J."/>
            <person name="Wilson R.K."/>
        </authorList>
    </citation>
    <scope>NUCLEOTIDE SEQUENCE [LARGE SCALE GENOMIC DNA]</scope>
    <source>
        <strain>ATCC 9150 / SARB42</strain>
    </source>
</reference>
<dbReference type="EC" id="3.1.1.31" evidence="1"/>
<dbReference type="EMBL" id="CP000026">
    <property type="protein sequence ID" value="AAV77875.1"/>
    <property type="molecule type" value="Genomic_DNA"/>
</dbReference>
<dbReference type="RefSeq" id="WP_000815473.1">
    <property type="nucleotide sequence ID" value="NC_006511.1"/>
</dbReference>
<dbReference type="SMR" id="Q5PG56"/>
<dbReference type="KEGG" id="spt:SPA1967"/>
<dbReference type="HOGENOM" id="CLU_038716_2_0_6"/>
<dbReference type="UniPathway" id="UPA00115">
    <property type="reaction ID" value="UER00409"/>
</dbReference>
<dbReference type="Proteomes" id="UP000008185">
    <property type="component" value="Chromosome"/>
</dbReference>
<dbReference type="GO" id="GO:0005829">
    <property type="term" value="C:cytosol"/>
    <property type="evidence" value="ECO:0007669"/>
    <property type="project" value="TreeGrafter"/>
</dbReference>
<dbReference type="GO" id="GO:0017057">
    <property type="term" value="F:6-phosphogluconolactonase activity"/>
    <property type="evidence" value="ECO:0007669"/>
    <property type="project" value="UniProtKB-UniRule"/>
</dbReference>
<dbReference type="GO" id="GO:0006006">
    <property type="term" value="P:glucose metabolic process"/>
    <property type="evidence" value="ECO:0007669"/>
    <property type="project" value="UniProtKB-KW"/>
</dbReference>
<dbReference type="GO" id="GO:0009051">
    <property type="term" value="P:pentose-phosphate shunt, oxidative branch"/>
    <property type="evidence" value="ECO:0007669"/>
    <property type="project" value="UniProtKB-UniRule"/>
</dbReference>
<dbReference type="FunFam" id="2.130.10.10:FF:000051">
    <property type="entry name" value="6-phosphogluconolactonase"/>
    <property type="match status" value="1"/>
</dbReference>
<dbReference type="Gene3D" id="2.130.10.10">
    <property type="entry name" value="YVTN repeat-like/Quinoprotein amine dehydrogenase"/>
    <property type="match status" value="1"/>
</dbReference>
<dbReference type="HAMAP" id="MF_01605">
    <property type="entry name" value="6P_gluconolactonase"/>
    <property type="match status" value="1"/>
</dbReference>
<dbReference type="InterPro" id="IPR022528">
    <property type="entry name" value="6-phosphogluconolactonase_YbhE"/>
</dbReference>
<dbReference type="InterPro" id="IPR050282">
    <property type="entry name" value="Cycloisomerase_2"/>
</dbReference>
<dbReference type="InterPro" id="IPR019405">
    <property type="entry name" value="Lactonase_7-beta_prop"/>
</dbReference>
<dbReference type="InterPro" id="IPR011045">
    <property type="entry name" value="N2O_reductase_N"/>
</dbReference>
<dbReference type="InterPro" id="IPR015943">
    <property type="entry name" value="WD40/YVTN_repeat-like_dom_sf"/>
</dbReference>
<dbReference type="NCBIfam" id="NF008258">
    <property type="entry name" value="PRK11028.1"/>
    <property type="match status" value="1"/>
</dbReference>
<dbReference type="PANTHER" id="PTHR30344:SF1">
    <property type="entry name" value="6-PHOSPHOGLUCONOLACTONASE"/>
    <property type="match status" value="1"/>
</dbReference>
<dbReference type="PANTHER" id="PTHR30344">
    <property type="entry name" value="6-PHOSPHOGLUCONOLACTONASE-RELATED"/>
    <property type="match status" value="1"/>
</dbReference>
<dbReference type="Pfam" id="PF10282">
    <property type="entry name" value="Lactonase"/>
    <property type="match status" value="1"/>
</dbReference>
<dbReference type="SUPFAM" id="SSF50974">
    <property type="entry name" value="Nitrous oxide reductase, N-terminal domain"/>
    <property type="match status" value="2"/>
</dbReference>
<organism>
    <name type="scientific">Salmonella paratyphi A (strain ATCC 9150 / SARB42)</name>
    <dbReference type="NCBI Taxonomy" id="295319"/>
    <lineage>
        <taxon>Bacteria</taxon>
        <taxon>Pseudomonadati</taxon>
        <taxon>Pseudomonadota</taxon>
        <taxon>Gammaproteobacteria</taxon>
        <taxon>Enterobacterales</taxon>
        <taxon>Enterobacteriaceae</taxon>
        <taxon>Salmonella</taxon>
    </lineage>
</organism>
<gene>
    <name evidence="1" type="primary">pgl</name>
    <name type="ordered locus">SPA1967</name>
</gene>
<proteinExistence type="inferred from homology"/>
<protein>
    <recommendedName>
        <fullName evidence="1">6-phosphogluconolactonase</fullName>
        <shortName evidence="1">6-P-gluconolactonase</shortName>
        <ecNumber evidence="1">3.1.1.31</ecNumber>
    </recommendedName>
</protein>